<organism>
    <name type="scientific">Caenorhabditis briggsae</name>
    <dbReference type="NCBI Taxonomy" id="6238"/>
    <lineage>
        <taxon>Eukaryota</taxon>
        <taxon>Metazoa</taxon>
        <taxon>Ecdysozoa</taxon>
        <taxon>Nematoda</taxon>
        <taxon>Chromadorea</taxon>
        <taxon>Rhabditida</taxon>
        <taxon>Rhabditina</taxon>
        <taxon>Rhabditomorpha</taxon>
        <taxon>Rhabditoidea</taxon>
        <taxon>Rhabditidae</taxon>
        <taxon>Peloderinae</taxon>
        <taxon>Caenorhabditis</taxon>
    </lineage>
</organism>
<protein>
    <recommendedName>
        <fullName>C-type lectin domain-containing protein 87</fullName>
    </recommendedName>
    <alternativeName>
        <fullName>Chondroitin proteoglycan 5</fullName>
    </alternativeName>
</protein>
<gene>
    <name evidence="2" type="primary">clec-87</name>
    <name type="synonym">cpg-5</name>
    <name type="ORF">CBG03358</name>
</gene>
<feature type="signal peptide" evidence="3">
    <location>
        <begin position="1"/>
        <end position="20"/>
    </location>
</feature>
<feature type="chain" id="PRO_0000320337" description="C-type lectin domain-containing protein 87" evidence="3">
    <location>
        <begin position="21"/>
        <end position="233"/>
    </location>
</feature>
<feature type="domain" description="C-type lectin" evidence="4">
    <location>
        <begin position="93"/>
        <end position="223"/>
    </location>
</feature>
<feature type="glycosylation site" description="N-linked (GlcNAc...) asparagine" evidence="3">
    <location>
        <position position="26"/>
    </location>
</feature>
<feature type="glycosylation site" description="O-linked (Xyl...) (chondroitin sulfate) serine" evidence="1">
    <location>
        <position position="32"/>
    </location>
</feature>
<feature type="glycosylation site" description="N-linked (GlcNAc...) asparagine" evidence="3">
    <location>
        <position position="81"/>
    </location>
</feature>
<feature type="glycosylation site" description="N-linked (GlcNAc...) asparagine" evidence="3">
    <location>
        <position position="225"/>
    </location>
</feature>
<feature type="disulfide bond" evidence="4">
    <location>
        <begin position="114"/>
        <end position="222"/>
    </location>
</feature>
<feature type="disulfide bond" evidence="4">
    <location>
        <begin position="193"/>
        <end position="214"/>
    </location>
</feature>
<sequence>MRFFRFLVFPVIAGLSSVLAAPITSNDTVDGSGEAPETLLQNSEEQPHQRLKFYNWDYKDLGTTAFEDISFPARQPPVAVNQSEQCPDGWLRFADSCYWIETELMGFAKAERKCFEKQSTLFVANSLEEWDSIRSHSKEAYFSWIGLVRFTHYEKSEQLPRWQTEGAINPTKMNWLIKPYKPIVNGWTSFANCAASYKSPATLESASYTFFYPCTYLLYSICERNSTIVNVMQ</sequence>
<accession>A8WUV1</accession>
<evidence type="ECO:0000250" key="1"/>
<evidence type="ECO:0000250" key="2">
    <source>
        <dbReference type="UniProtKB" id="Q9XVS3"/>
    </source>
</evidence>
<evidence type="ECO:0000255" key="3"/>
<evidence type="ECO:0000255" key="4">
    <source>
        <dbReference type="PROSITE-ProRule" id="PRU00040"/>
    </source>
</evidence>
<evidence type="ECO:0000305" key="5"/>
<evidence type="ECO:0000312" key="6">
    <source>
        <dbReference type="EMBL" id="CAP24263.1"/>
    </source>
</evidence>
<reference evidence="5 6" key="1">
    <citation type="journal article" date="2003" name="PLoS Biol.">
        <title>The genome sequence of Caenorhabditis briggsae: a platform for comparative genomics.</title>
        <authorList>
            <person name="Stein L.D."/>
            <person name="Bao Z."/>
            <person name="Blasiar D."/>
            <person name="Blumenthal T."/>
            <person name="Brent M.R."/>
            <person name="Chen N."/>
            <person name="Chinwalla A."/>
            <person name="Clarke L."/>
            <person name="Clee C."/>
            <person name="Coghlan A."/>
            <person name="Coulson A."/>
            <person name="D'Eustachio P."/>
            <person name="Fitch D.H.A."/>
            <person name="Fulton L.A."/>
            <person name="Fulton R.E."/>
            <person name="Griffiths-Jones S."/>
            <person name="Harris T.W."/>
            <person name="Hillier L.W."/>
            <person name="Kamath R."/>
            <person name="Kuwabara P.E."/>
            <person name="Mardis E.R."/>
            <person name="Marra M.A."/>
            <person name="Miner T.L."/>
            <person name="Minx P."/>
            <person name="Mullikin J.C."/>
            <person name="Plumb R.W."/>
            <person name="Rogers J."/>
            <person name="Schein J.E."/>
            <person name="Sohrmann M."/>
            <person name="Spieth J."/>
            <person name="Stajich J.E."/>
            <person name="Wei C."/>
            <person name="Willey D."/>
            <person name="Wilson R.K."/>
            <person name="Durbin R.M."/>
            <person name="Waterston R.H."/>
        </authorList>
    </citation>
    <scope>NUCLEOTIDE SEQUENCE [LARGE SCALE GENOMIC DNA]</scope>
    <source>
        <strain evidence="6">AF16</strain>
    </source>
</reference>
<proteinExistence type="inferred from homology"/>
<name>CLC87_CAEBR</name>
<keyword id="KW-1015">Disulfide bond</keyword>
<keyword id="KW-0325">Glycoprotein</keyword>
<keyword id="KW-0430">Lectin</keyword>
<keyword id="KW-0654">Proteoglycan</keyword>
<keyword id="KW-1185">Reference proteome</keyword>
<keyword id="KW-0732">Signal</keyword>
<dbReference type="EMBL" id="HE601244">
    <property type="protein sequence ID" value="CAP24263.1"/>
    <property type="molecule type" value="Genomic_DNA"/>
</dbReference>
<dbReference type="SMR" id="A8WUV1"/>
<dbReference type="FunCoup" id="A8WUV1">
    <property type="interactions" value="171"/>
</dbReference>
<dbReference type="STRING" id="6238.A8WUV1"/>
<dbReference type="GlyCosmos" id="A8WUV1">
    <property type="glycosylation" value="4 sites, No reported glycans"/>
</dbReference>
<dbReference type="EnsemblMetazoa" id="CBG03358.1">
    <property type="protein sequence ID" value="CBG03358.1"/>
    <property type="gene ID" value="WBGene00026232"/>
</dbReference>
<dbReference type="KEGG" id="cbr:CBG_03358"/>
<dbReference type="CTD" id="8575675"/>
<dbReference type="WormBase" id="CBG03358">
    <property type="protein sequence ID" value="CBP14724"/>
    <property type="gene ID" value="WBGene00026232"/>
    <property type="gene designation" value="Cbr-clec-87"/>
</dbReference>
<dbReference type="eggNOG" id="KOG4297">
    <property type="taxonomic scope" value="Eukaryota"/>
</dbReference>
<dbReference type="HOGENOM" id="CLU_093598_0_0_1"/>
<dbReference type="InParanoid" id="A8WUV1"/>
<dbReference type="OMA" id="CYWIETE"/>
<dbReference type="Proteomes" id="UP000008549">
    <property type="component" value="Unassembled WGS sequence"/>
</dbReference>
<dbReference type="GO" id="GO:0009897">
    <property type="term" value="C:external side of plasma membrane"/>
    <property type="evidence" value="ECO:0000318"/>
    <property type="project" value="GO_Central"/>
</dbReference>
<dbReference type="GO" id="GO:0030246">
    <property type="term" value="F:carbohydrate binding"/>
    <property type="evidence" value="ECO:0000318"/>
    <property type="project" value="GO_Central"/>
</dbReference>
<dbReference type="GO" id="GO:0038187">
    <property type="term" value="F:pattern recognition receptor activity"/>
    <property type="evidence" value="ECO:0000318"/>
    <property type="project" value="GO_Central"/>
</dbReference>
<dbReference type="GO" id="GO:0006955">
    <property type="term" value="P:immune response"/>
    <property type="evidence" value="ECO:0000318"/>
    <property type="project" value="GO_Central"/>
</dbReference>
<dbReference type="Gene3D" id="3.10.100.10">
    <property type="entry name" value="Mannose-Binding Protein A, subunit A"/>
    <property type="match status" value="1"/>
</dbReference>
<dbReference type="InterPro" id="IPR001304">
    <property type="entry name" value="C-type_lectin-like"/>
</dbReference>
<dbReference type="InterPro" id="IPR016186">
    <property type="entry name" value="C-type_lectin-like/link_sf"/>
</dbReference>
<dbReference type="InterPro" id="IPR051379">
    <property type="entry name" value="C-type_Lectin_Receptor_IMM"/>
</dbReference>
<dbReference type="InterPro" id="IPR016187">
    <property type="entry name" value="CTDL_fold"/>
</dbReference>
<dbReference type="PANTHER" id="PTHR46746">
    <property type="entry name" value="KILLER CELL LECTIN-LIKE RECEPTOR SUBFAMILY F MEMBER 2"/>
    <property type="match status" value="1"/>
</dbReference>
<dbReference type="PANTHER" id="PTHR46746:SF6">
    <property type="entry name" value="KILLER CELL LECTIN-LIKE RECEPTOR SUBFAMILY F MEMBER 2"/>
    <property type="match status" value="1"/>
</dbReference>
<dbReference type="Pfam" id="PF00059">
    <property type="entry name" value="Lectin_C"/>
    <property type="match status" value="1"/>
</dbReference>
<dbReference type="SMART" id="SM00034">
    <property type="entry name" value="CLECT"/>
    <property type="match status" value="1"/>
</dbReference>
<dbReference type="SUPFAM" id="SSF56436">
    <property type="entry name" value="C-type lectin-like"/>
    <property type="match status" value="1"/>
</dbReference>
<dbReference type="PROSITE" id="PS50041">
    <property type="entry name" value="C_TYPE_LECTIN_2"/>
    <property type="match status" value="1"/>
</dbReference>